<accession>Q767K8</accession>
<reference key="1">
    <citation type="journal article" date="2004" name="Immunogenetics">
        <title>Nucleotide sequencing analysis of the swine 433-kb genomic segment located between the non-classical and classical SLA class I gene clusters.</title>
        <authorList>
            <person name="Shigenari A."/>
            <person name="Ando A."/>
            <person name="Renard C."/>
            <person name="Chardon P."/>
            <person name="Shiina T."/>
            <person name="Kulski J.K."/>
            <person name="Yasue H."/>
            <person name="Inoko H."/>
        </authorList>
    </citation>
    <scope>NUCLEOTIDE SEQUENCE [LARGE SCALE GENOMIC DNA]</scope>
    <source>
        <strain>Large white</strain>
    </source>
</reference>
<reference evidence="6 7" key="2">
    <citation type="journal article" date="2015" name="Science">
        <title>Ribosome. The complete structure of the 55S mammalian mitochondrial ribosome.</title>
        <authorList>
            <person name="Greber B.J."/>
            <person name="Bieri P."/>
            <person name="Leibundgut M."/>
            <person name="Leitner A."/>
            <person name="Aebersold R."/>
            <person name="Boehringer D."/>
            <person name="Ban N."/>
        </authorList>
    </citation>
    <scope>STRUCTURE BY ELECTRON MICROSCOPY (3.60 ANGSTROMS)</scope>
    <scope>SUBCELLULAR LOCATION</scope>
    <scope>SUBUNIT</scope>
</reference>
<organism>
    <name type="scientific">Sus scrofa</name>
    <name type="common">Pig</name>
    <dbReference type="NCBI Taxonomy" id="9823"/>
    <lineage>
        <taxon>Eukaryota</taxon>
        <taxon>Metazoa</taxon>
        <taxon>Chordata</taxon>
        <taxon>Craniata</taxon>
        <taxon>Vertebrata</taxon>
        <taxon>Euteleostomi</taxon>
        <taxon>Mammalia</taxon>
        <taxon>Eutheria</taxon>
        <taxon>Laurasiatheria</taxon>
        <taxon>Artiodactyla</taxon>
        <taxon>Suina</taxon>
        <taxon>Suidae</taxon>
        <taxon>Sus</taxon>
    </lineage>
</organism>
<comment type="subunit">
    <text evidence="4">Component of the mitochondrial ribosome small subunit (28S) which comprises a 12S rRNA and about 30 distinct proteins.</text>
</comment>
<comment type="subcellular location">
    <subcellularLocation>
        <location evidence="4">Mitochondrion</location>
    </subcellularLocation>
</comment>
<comment type="similarity">
    <text evidence="5">Belongs to the bacterial ribosomal protein bS18 family. Mitochondrion-specific ribosomal protein mS40 subfamily.</text>
</comment>
<evidence type="ECO:0000250" key="1">
    <source>
        <dbReference type="UniProtKB" id="P82918"/>
    </source>
</evidence>
<evidence type="ECO:0000250" key="2">
    <source>
        <dbReference type="UniProtKB" id="Q9Y676"/>
    </source>
</evidence>
<evidence type="ECO:0000256" key="3">
    <source>
        <dbReference type="SAM" id="MobiDB-lite"/>
    </source>
</evidence>
<evidence type="ECO:0000269" key="4">
    <source>
    </source>
</evidence>
<evidence type="ECO:0000305" key="5"/>
<evidence type="ECO:0007744" key="6">
    <source>
        <dbReference type="PDB" id="5AJ3"/>
    </source>
</evidence>
<evidence type="ECO:0007744" key="7">
    <source>
        <dbReference type="PDB" id="5AJ4"/>
    </source>
</evidence>
<protein>
    <recommendedName>
        <fullName evidence="5">Small ribosomal subunit protein mS40</fullName>
    </recommendedName>
    <alternativeName>
        <fullName>28S ribosomal protein S18-2, mitochondrial</fullName>
        <shortName>MRP-S18-2</shortName>
    </alternativeName>
    <alternativeName>
        <fullName>28S ribosomal protein S18b, mitochondrial</fullName>
        <shortName>MRP-S18-b</shortName>
        <shortName>Mrps18-b</shortName>
        <shortName>S18mt-b</shortName>
    </alternativeName>
</protein>
<sequence>MAASILNVLLRRLPGVSPFRGAYGVQVLLQTLCTKAPPEDDSLPQVPISPYKDEPWKYLDSEEYQNRYGSRPVWADYRRNHKGGIPPQRTRKMCIRGNKVAGNPCPICRDQKLHVDFRNVKLLEQFVCAHTGIIFHAPYTGVCMKQHKKLTQAIQKARDHGLLRYHIPQVEPRDLDFSTTHGAVSSTPPAPTLVSGDPWYPWYSWKQPPERELSRLRRLYQGRLREESGPPPELMPEVPLTAPAEASSTEPGAPQSAL</sequence>
<feature type="transit peptide" description="Mitochondrion" evidence="1">
    <location>
        <begin position="1"/>
        <end position="35"/>
    </location>
</feature>
<feature type="chain" id="PRO_0000317427" description="Small ribosomal subunit protein mS40">
    <location>
        <begin position="36"/>
        <end position="258"/>
    </location>
</feature>
<feature type="region of interest" description="Disordered" evidence="3">
    <location>
        <begin position="223"/>
        <end position="258"/>
    </location>
</feature>
<feature type="modified residue" description="Phosphoserine" evidence="2">
    <location>
        <position position="49"/>
    </location>
</feature>
<dbReference type="EMBL" id="AB113356">
    <property type="protein sequence ID" value="BAD08429.1"/>
    <property type="molecule type" value="Genomic_DNA"/>
</dbReference>
<dbReference type="EMBL" id="AB113357">
    <property type="protein sequence ID" value="BAD08441.1"/>
    <property type="molecule type" value="Genomic_DNA"/>
</dbReference>
<dbReference type="RefSeq" id="NP_001116612.1">
    <property type="nucleotide sequence ID" value="NM_001123140.1"/>
</dbReference>
<dbReference type="PDB" id="5AJ3">
    <property type="method" value="EM"/>
    <property type="resolution" value="3.60 A"/>
    <property type="chains" value="p=1-258"/>
</dbReference>
<dbReference type="PDB" id="5AJ4">
    <property type="method" value="EM"/>
    <property type="resolution" value="3.80 A"/>
    <property type="chains" value="Ap=51-238"/>
</dbReference>
<dbReference type="PDB" id="6GAW">
    <property type="method" value="EM"/>
    <property type="resolution" value="3.20 A"/>
    <property type="chains" value="Ap=1-258"/>
</dbReference>
<dbReference type="PDB" id="6GAZ">
    <property type="method" value="EM"/>
    <property type="resolution" value="3.10 A"/>
    <property type="chains" value="Ap=1-258"/>
</dbReference>
<dbReference type="PDB" id="6YDP">
    <property type="method" value="EM"/>
    <property type="resolution" value="3.00 A"/>
    <property type="chains" value="Ap=1-258"/>
</dbReference>
<dbReference type="PDB" id="6YDW">
    <property type="method" value="EM"/>
    <property type="resolution" value="4.20 A"/>
    <property type="chains" value="Ap=1-258"/>
</dbReference>
<dbReference type="PDB" id="7NQH">
    <property type="method" value="EM"/>
    <property type="resolution" value="3.50 A"/>
    <property type="chains" value="Ap=1-258"/>
</dbReference>
<dbReference type="PDB" id="7NQL">
    <property type="method" value="EM"/>
    <property type="resolution" value="3.40 A"/>
    <property type="chains" value="Ap=1-258"/>
</dbReference>
<dbReference type="PDB" id="7NSI">
    <property type="method" value="EM"/>
    <property type="resolution" value="4.60 A"/>
    <property type="chains" value="Ap=1-258"/>
</dbReference>
<dbReference type="PDB" id="7NSJ">
    <property type="method" value="EM"/>
    <property type="resolution" value="3.90 A"/>
    <property type="chains" value="Ap=1-258"/>
</dbReference>
<dbReference type="PDB" id="8OIN">
    <property type="method" value="EM"/>
    <property type="resolution" value="3.60 A"/>
    <property type="chains" value="AO=1-258"/>
</dbReference>
<dbReference type="PDB" id="8OIP">
    <property type="method" value="EM"/>
    <property type="resolution" value="3.60 A"/>
    <property type="chains" value="AO=1-258"/>
</dbReference>
<dbReference type="PDBsum" id="5AJ3"/>
<dbReference type="PDBsum" id="5AJ4"/>
<dbReference type="PDBsum" id="6GAW"/>
<dbReference type="PDBsum" id="6GAZ"/>
<dbReference type="PDBsum" id="6YDP"/>
<dbReference type="PDBsum" id="6YDW"/>
<dbReference type="PDBsum" id="7NQH"/>
<dbReference type="PDBsum" id="7NQL"/>
<dbReference type="PDBsum" id="7NSI"/>
<dbReference type="PDBsum" id="7NSJ"/>
<dbReference type="PDBsum" id="8OIN"/>
<dbReference type="PDBsum" id="8OIP"/>
<dbReference type="EMDB" id="EMD-10778"/>
<dbReference type="EMDB" id="EMD-10779"/>
<dbReference type="EMDB" id="EMD-12527"/>
<dbReference type="EMDB" id="EMD-12529"/>
<dbReference type="EMDB" id="EMD-12568"/>
<dbReference type="EMDB" id="EMD-12569"/>
<dbReference type="EMDB" id="EMD-16894"/>
<dbReference type="EMDB" id="EMD-16895"/>
<dbReference type="EMDB" id="EMD-4368"/>
<dbReference type="EMDB" id="EMD-4369"/>
<dbReference type="SMR" id="Q767K8"/>
<dbReference type="FunCoup" id="Q767K8">
    <property type="interactions" value="497"/>
</dbReference>
<dbReference type="STRING" id="9823.ENSSSCP00000024944"/>
<dbReference type="PaxDb" id="9823-ENSSSCP00000024944"/>
<dbReference type="Ensembl" id="ENSSSCT00000027559.3">
    <property type="protein sequence ID" value="ENSSSCP00000024944.1"/>
    <property type="gene ID" value="ENSSSCG00000029425.3"/>
</dbReference>
<dbReference type="Ensembl" id="ENSSSCT00015044086.1">
    <property type="protein sequence ID" value="ENSSSCP00015017438.1"/>
    <property type="gene ID" value="ENSSSCG00015032778.1"/>
</dbReference>
<dbReference type="Ensembl" id="ENSSSCT00025108291.1">
    <property type="protein sequence ID" value="ENSSSCP00025049036.1"/>
    <property type="gene ID" value="ENSSSCG00025077792.1"/>
</dbReference>
<dbReference type="Ensembl" id="ENSSSCT00030086090.1">
    <property type="protein sequence ID" value="ENSSSCP00030039692.1"/>
    <property type="gene ID" value="ENSSSCG00030061571.1"/>
</dbReference>
<dbReference type="Ensembl" id="ENSSSCT00035085417.1">
    <property type="protein sequence ID" value="ENSSSCP00035035561.1"/>
    <property type="gene ID" value="ENSSSCG00035063512.1"/>
</dbReference>
<dbReference type="Ensembl" id="ENSSSCT00045068521.1">
    <property type="protein sequence ID" value="ENSSSCP00045048757.1"/>
    <property type="gene ID" value="ENSSSCG00045039367.1"/>
</dbReference>
<dbReference type="Ensembl" id="ENSSSCT00050022550.1">
    <property type="protein sequence ID" value="ENSSSCP00050009545.1"/>
    <property type="gene ID" value="ENSSSCG00050016533.1"/>
</dbReference>
<dbReference type="Ensembl" id="ENSSSCT00055061023.1">
    <property type="protein sequence ID" value="ENSSSCP00055048925.1"/>
    <property type="gene ID" value="ENSSSCG00055030616.1"/>
</dbReference>
<dbReference type="Ensembl" id="ENSSSCT00060069119.1">
    <property type="protein sequence ID" value="ENSSSCP00060029737.1"/>
    <property type="gene ID" value="ENSSSCG00060050808.1"/>
</dbReference>
<dbReference type="Ensembl" id="ENSSSCT00065076783.1">
    <property type="protein sequence ID" value="ENSSSCP00065033393.1"/>
    <property type="gene ID" value="ENSSSCG00065056075.1"/>
</dbReference>
<dbReference type="Ensembl" id="ENSSSCT00070049219.1">
    <property type="protein sequence ID" value="ENSSSCP00070041572.1"/>
    <property type="gene ID" value="ENSSSCG00070024659.1"/>
</dbReference>
<dbReference type="Ensembl" id="ENSSSCT00085022572">
    <property type="protein sequence ID" value="ENSSSCP00085015579"/>
    <property type="gene ID" value="ENSSSCG00085012019"/>
</dbReference>
<dbReference type="Ensembl" id="ENSSSCT00105033261">
    <property type="protein sequence ID" value="ENSSSCP00105023212"/>
    <property type="gene ID" value="ENSSSCG00105017316"/>
</dbReference>
<dbReference type="Ensembl" id="ENSSSCT00110039872">
    <property type="protein sequence ID" value="ENSSSCP00110027700"/>
    <property type="gene ID" value="ENSSSCG00110020722"/>
</dbReference>
<dbReference type="Ensembl" id="ENSSSCT00115014138">
    <property type="protein sequence ID" value="ENSSSCP00115013349"/>
    <property type="gene ID" value="ENSSSCG00115008106"/>
</dbReference>
<dbReference type="Ensembl" id="ENSSSCT00130038977">
    <property type="protein sequence ID" value="ENSSSCP00130027397"/>
    <property type="gene ID" value="ENSSSCG00130020113"/>
</dbReference>
<dbReference type="GeneID" id="100144465"/>
<dbReference type="KEGG" id="ssc:100144465"/>
<dbReference type="CTD" id="28973"/>
<dbReference type="VGNC" id="VGNC:90385">
    <property type="gene designation" value="MRPS18B"/>
</dbReference>
<dbReference type="eggNOG" id="KOG4021">
    <property type="taxonomic scope" value="Eukaryota"/>
</dbReference>
<dbReference type="GeneTree" id="ENSGT00390000010554"/>
<dbReference type="HOGENOM" id="CLU_089746_0_0_1"/>
<dbReference type="InParanoid" id="Q767K8"/>
<dbReference type="OMA" id="RSAYGVQ"/>
<dbReference type="OrthoDB" id="21463at2759"/>
<dbReference type="TreeFam" id="TF315059"/>
<dbReference type="Reactome" id="R-SSC-5389840">
    <property type="pathway name" value="Mitochondrial translation elongation"/>
</dbReference>
<dbReference type="Reactome" id="R-SSC-5419276">
    <property type="pathway name" value="Mitochondrial translation termination"/>
</dbReference>
<dbReference type="EvolutionaryTrace" id="Q767K8"/>
<dbReference type="Proteomes" id="UP000008227">
    <property type="component" value="Chromosome 7"/>
</dbReference>
<dbReference type="Proteomes" id="UP000314985">
    <property type="component" value="Chromosome 7"/>
</dbReference>
<dbReference type="Proteomes" id="UP000694570">
    <property type="component" value="Unplaced"/>
</dbReference>
<dbReference type="Proteomes" id="UP000694571">
    <property type="component" value="Unplaced"/>
</dbReference>
<dbReference type="Proteomes" id="UP000694720">
    <property type="component" value="Unplaced"/>
</dbReference>
<dbReference type="Proteomes" id="UP000694722">
    <property type="component" value="Unplaced"/>
</dbReference>
<dbReference type="Proteomes" id="UP000694723">
    <property type="component" value="Unplaced"/>
</dbReference>
<dbReference type="Proteomes" id="UP000694724">
    <property type="component" value="Unplaced"/>
</dbReference>
<dbReference type="Proteomes" id="UP000694725">
    <property type="component" value="Unplaced"/>
</dbReference>
<dbReference type="Proteomes" id="UP000694726">
    <property type="component" value="Unplaced"/>
</dbReference>
<dbReference type="Proteomes" id="UP000694727">
    <property type="component" value="Unplaced"/>
</dbReference>
<dbReference type="Proteomes" id="UP000694728">
    <property type="component" value="Unplaced"/>
</dbReference>
<dbReference type="Bgee" id="ENSSSCG00000029425">
    <property type="expression patterns" value="Expressed in semimembranosus muscle and 44 other cell types or tissues"/>
</dbReference>
<dbReference type="ExpressionAtlas" id="Q767K8">
    <property type="expression patterns" value="baseline and differential"/>
</dbReference>
<dbReference type="GO" id="GO:0030054">
    <property type="term" value="C:cell junction"/>
    <property type="evidence" value="ECO:0007669"/>
    <property type="project" value="Ensembl"/>
</dbReference>
<dbReference type="GO" id="GO:0005763">
    <property type="term" value="C:mitochondrial small ribosomal subunit"/>
    <property type="evidence" value="ECO:0000314"/>
    <property type="project" value="UniProtKB"/>
</dbReference>
<dbReference type="GO" id="GO:0005739">
    <property type="term" value="C:mitochondrion"/>
    <property type="evidence" value="ECO:0000318"/>
    <property type="project" value="GO_Central"/>
</dbReference>
<dbReference type="GO" id="GO:0005654">
    <property type="term" value="C:nucleoplasm"/>
    <property type="evidence" value="ECO:0007669"/>
    <property type="project" value="Ensembl"/>
</dbReference>
<dbReference type="GO" id="GO:0003735">
    <property type="term" value="F:structural constituent of ribosome"/>
    <property type="evidence" value="ECO:0007669"/>
    <property type="project" value="InterPro"/>
</dbReference>
<dbReference type="GO" id="GO:0032543">
    <property type="term" value="P:mitochondrial translation"/>
    <property type="evidence" value="ECO:0007669"/>
    <property type="project" value="InterPro"/>
</dbReference>
<dbReference type="FunFam" id="4.10.640.10:FF:000008">
    <property type="entry name" value="28S ribosomal protein S18b, mitochondrial"/>
    <property type="match status" value="1"/>
</dbReference>
<dbReference type="Gene3D" id="4.10.640.10">
    <property type="entry name" value="Ribosomal protein S18"/>
    <property type="match status" value="1"/>
</dbReference>
<dbReference type="InterPro" id="IPR040054">
    <property type="entry name" value="MRPS18B"/>
</dbReference>
<dbReference type="InterPro" id="IPR001648">
    <property type="entry name" value="Ribosomal_bS18"/>
</dbReference>
<dbReference type="InterPro" id="IPR036870">
    <property type="entry name" value="Ribosomal_bS18_sf"/>
</dbReference>
<dbReference type="PANTHER" id="PTHR13329">
    <property type="entry name" value="MITOCHONDRIAL RIBOSOMAL PROTEIN S18B"/>
    <property type="match status" value="1"/>
</dbReference>
<dbReference type="PANTHER" id="PTHR13329:SF2">
    <property type="entry name" value="SMALL RIBOSOMAL SUBUNIT PROTEIN MS40"/>
    <property type="match status" value="1"/>
</dbReference>
<dbReference type="Pfam" id="PF01084">
    <property type="entry name" value="Ribosomal_S18"/>
    <property type="match status" value="1"/>
</dbReference>
<dbReference type="SUPFAM" id="SSF46911">
    <property type="entry name" value="Ribosomal protein S18"/>
    <property type="match status" value="1"/>
</dbReference>
<name>RT18B_PIG</name>
<proteinExistence type="evidence at protein level"/>
<keyword id="KW-0002">3D-structure</keyword>
<keyword id="KW-0496">Mitochondrion</keyword>
<keyword id="KW-0597">Phosphoprotein</keyword>
<keyword id="KW-1185">Reference proteome</keyword>
<keyword id="KW-0687">Ribonucleoprotein</keyword>
<keyword id="KW-0689">Ribosomal protein</keyword>
<keyword id="KW-0809">Transit peptide</keyword>
<gene>
    <name type="primary">MRPS18B</name>
</gene>